<comment type="catalytic activity">
    <reaction evidence="1">
        <text>N-(5-phospho-beta-D-ribosyl)anthranilate = 1-(2-carboxyphenylamino)-1-deoxy-D-ribulose 5-phosphate</text>
        <dbReference type="Rhea" id="RHEA:21540"/>
        <dbReference type="ChEBI" id="CHEBI:18277"/>
        <dbReference type="ChEBI" id="CHEBI:58613"/>
        <dbReference type="EC" id="5.3.1.24"/>
    </reaction>
</comment>
<comment type="pathway">
    <text evidence="1">Amino-acid biosynthesis; L-tryptophan biosynthesis; L-tryptophan from chorismate: step 3/5.</text>
</comment>
<comment type="similarity">
    <text evidence="1">Belongs to the TrpF family.</text>
</comment>
<feature type="chain" id="PRO_1000197115" description="N-(5'-phosphoribosyl)anthranilate isomerase">
    <location>
        <begin position="1"/>
        <end position="217"/>
    </location>
</feature>
<organism>
    <name type="scientific">Chlorobium phaeovibrioides (strain DSM 265 / 1930)</name>
    <name type="common">Prosthecochloris vibrioformis (strain DSM 265)</name>
    <dbReference type="NCBI Taxonomy" id="290318"/>
    <lineage>
        <taxon>Bacteria</taxon>
        <taxon>Pseudomonadati</taxon>
        <taxon>Chlorobiota</taxon>
        <taxon>Chlorobiia</taxon>
        <taxon>Chlorobiales</taxon>
        <taxon>Chlorobiaceae</taxon>
        <taxon>Chlorobium/Pelodictyon group</taxon>
        <taxon>Chlorobium</taxon>
    </lineage>
</organism>
<name>TRPF_CHLPM</name>
<proteinExistence type="inferred from homology"/>
<dbReference type="EC" id="5.3.1.24" evidence="1"/>
<dbReference type="EMBL" id="CP000607">
    <property type="protein sequence ID" value="ABP37137.1"/>
    <property type="molecule type" value="Genomic_DNA"/>
</dbReference>
<dbReference type="SMR" id="A4SF78"/>
<dbReference type="STRING" id="290318.Cvib_1123"/>
<dbReference type="KEGG" id="pvi:Cvib_1123"/>
<dbReference type="eggNOG" id="COG0135">
    <property type="taxonomic scope" value="Bacteria"/>
</dbReference>
<dbReference type="HOGENOM" id="CLU_076364_2_0_10"/>
<dbReference type="OrthoDB" id="9786954at2"/>
<dbReference type="UniPathway" id="UPA00035">
    <property type="reaction ID" value="UER00042"/>
</dbReference>
<dbReference type="GO" id="GO:0004640">
    <property type="term" value="F:phosphoribosylanthranilate isomerase activity"/>
    <property type="evidence" value="ECO:0007669"/>
    <property type="project" value="UniProtKB-UniRule"/>
</dbReference>
<dbReference type="GO" id="GO:0000162">
    <property type="term" value="P:L-tryptophan biosynthetic process"/>
    <property type="evidence" value="ECO:0007669"/>
    <property type="project" value="UniProtKB-UniRule"/>
</dbReference>
<dbReference type="CDD" id="cd00405">
    <property type="entry name" value="PRAI"/>
    <property type="match status" value="1"/>
</dbReference>
<dbReference type="Gene3D" id="3.20.20.70">
    <property type="entry name" value="Aldolase class I"/>
    <property type="match status" value="1"/>
</dbReference>
<dbReference type="HAMAP" id="MF_00135">
    <property type="entry name" value="PRAI"/>
    <property type="match status" value="1"/>
</dbReference>
<dbReference type="InterPro" id="IPR013785">
    <property type="entry name" value="Aldolase_TIM"/>
</dbReference>
<dbReference type="InterPro" id="IPR001240">
    <property type="entry name" value="PRAI_dom"/>
</dbReference>
<dbReference type="InterPro" id="IPR011060">
    <property type="entry name" value="RibuloseP-bd_barrel"/>
</dbReference>
<dbReference type="InterPro" id="IPR044643">
    <property type="entry name" value="TrpF_fam"/>
</dbReference>
<dbReference type="PANTHER" id="PTHR42894">
    <property type="entry name" value="N-(5'-PHOSPHORIBOSYL)ANTHRANILATE ISOMERASE"/>
    <property type="match status" value="1"/>
</dbReference>
<dbReference type="PANTHER" id="PTHR42894:SF1">
    <property type="entry name" value="N-(5'-PHOSPHORIBOSYL)ANTHRANILATE ISOMERASE"/>
    <property type="match status" value="1"/>
</dbReference>
<dbReference type="Pfam" id="PF00697">
    <property type="entry name" value="PRAI"/>
    <property type="match status" value="1"/>
</dbReference>
<dbReference type="SUPFAM" id="SSF51366">
    <property type="entry name" value="Ribulose-phoshate binding barrel"/>
    <property type="match status" value="1"/>
</dbReference>
<protein>
    <recommendedName>
        <fullName evidence="1">N-(5'-phosphoribosyl)anthranilate isomerase</fullName>
        <shortName evidence="1">PRAI</shortName>
        <ecNumber evidence="1">5.3.1.24</ecNumber>
    </recommendedName>
</protein>
<keyword id="KW-0028">Amino-acid biosynthesis</keyword>
<keyword id="KW-0057">Aromatic amino acid biosynthesis</keyword>
<keyword id="KW-0413">Isomerase</keyword>
<keyword id="KW-0822">Tryptophan biosynthesis</keyword>
<accession>A4SF78</accession>
<reference key="1">
    <citation type="submission" date="2007-03" db="EMBL/GenBank/DDBJ databases">
        <title>Complete sequence of Prosthecochloris vibrioformis DSM 265.</title>
        <authorList>
            <consortium name="US DOE Joint Genome Institute"/>
            <person name="Copeland A."/>
            <person name="Lucas S."/>
            <person name="Lapidus A."/>
            <person name="Barry K."/>
            <person name="Detter J.C."/>
            <person name="Glavina del Rio T."/>
            <person name="Hammon N."/>
            <person name="Israni S."/>
            <person name="Pitluck S."/>
            <person name="Schmutz J."/>
            <person name="Larimer F."/>
            <person name="Land M."/>
            <person name="Hauser L."/>
            <person name="Mikhailova N."/>
            <person name="Li T."/>
            <person name="Overmann J."/>
            <person name="Schuster S.C."/>
            <person name="Bryant D.A."/>
            <person name="Richardson P."/>
        </authorList>
    </citation>
    <scope>NUCLEOTIDE SEQUENCE [LARGE SCALE GENOMIC DNA]</scope>
    <source>
        <strain>DSM 265 / 1930</strain>
    </source>
</reference>
<evidence type="ECO:0000255" key="1">
    <source>
        <dbReference type="HAMAP-Rule" id="MF_00135"/>
    </source>
</evidence>
<gene>
    <name evidence="1" type="primary">trpF</name>
    <name type="ordered locus">Cvib_1123</name>
</gene>
<sequence length="217" mass="23466">MTRTKICGITRLNDALHASSEGVDALGFNFSRKSPRSITPSAAKKIIDELPPFVSKVGIFVEQSPAEIADICSYSKIAVAQLHSERYSAADARFLKDMVHVIRVFRPDGSFSPQSLTPFAEESGVRTFLFDAYKEGMEGGTGEEIETSVARQIFPAEGAPFFRVLAGGLNPGNVAEAIRQFRPYGVDTASGVEAKPGIKDPEKISAFLLAVRLANQP</sequence>